<organism>
    <name type="scientific">Saccharomyces cerevisiae (strain ATCC 204508 / S288c)</name>
    <name type="common">Baker's yeast</name>
    <dbReference type="NCBI Taxonomy" id="559292"/>
    <lineage>
        <taxon>Eukaryota</taxon>
        <taxon>Fungi</taxon>
        <taxon>Dikarya</taxon>
        <taxon>Ascomycota</taxon>
        <taxon>Saccharomycotina</taxon>
        <taxon>Saccharomycetes</taxon>
        <taxon>Saccharomycetales</taxon>
        <taxon>Saccharomycetaceae</taxon>
        <taxon>Saccharomyces</taxon>
    </lineage>
</organism>
<feature type="chain" id="PRO_0000203252" description="Spore membrane assembly protein 2">
    <location>
        <begin position="1"/>
        <end position="369"/>
    </location>
</feature>
<feature type="topological domain" description="Cytoplasmic" evidence="1">
    <location>
        <begin position="1"/>
        <end position="6"/>
    </location>
</feature>
<feature type="transmembrane region" description="Helical" evidence="1">
    <location>
        <begin position="7"/>
        <end position="27"/>
    </location>
</feature>
<feature type="topological domain" description="Lumenal" evidence="1">
    <location>
        <begin position="28"/>
        <end position="220"/>
    </location>
</feature>
<feature type="transmembrane region" description="Helical" evidence="1">
    <location>
        <begin position="221"/>
        <end position="241"/>
    </location>
</feature>
<feature type="topological domain" description="Cytoplasmic" evidence="1">
    <location>
        <begin position="242"/>
        <end position="265"/>
    </location>
</feature>
<feature type="transmembrane region" description="Helical" evidence="1">
    <location>
        <begin position="266"/>
        <end position="286"/>
    </location>
</feature>
<feature type="topological domain" description="Lumenal" evidence="1">
    <location>
        <begin position="287"/>
        <end position="319"/>
    </location>
</feature>
<feature type="transmembrane region" description="Helical" evidence="1">
    <location>
        <begin position="320"/>
        <end position="340"/>
    </location>
</feature>
<feature type="topological domain" description="Cytoplasmic" evidence="1">
    <location>
        <begin position="341"/>
        <end position="369"/>
    </location>
</feature>
<feature type="region of interest" description="Disordered" evidence="2">
    <location>
        <begin position="348"/>
        <end position="369"/>
    </location>
</feature>
<protein>
    <recommendedName>
        <fullName>Spore membrane assembly protein 2</fullName>
    </recommendedName>
</protein>
<name>SMA2_YEAST</name>
<proteinExistence type="evidence at protein level"/>
<keyword id="KW-0256">Endoplasmic reticulum</keyword>
<keyword id="KW-0472">Membrane</keyword>
<keyword id="KW-1185">Reference proteome</keyword>
<keyword id="KW-0749">Sporulation</keyword>
<keyword id="KW-0812">Transmembrane</keyword>
<keyword id="KW-1133">Transmembrane helix</keyword>
<gene>
    <name type="primary">SMA2</name>
    <name type="ordered locus">YML066C</name>
</gene>
<accession>Q04658</accession>
<accession>D6VZA7</accession>
<reference key="1">
    <citation type="journal article" date="1997" name="Nature">
        <title>The nucleotide sequence of Saccharomyces cerevisiae chromosome XIII.</title>
        <authorList>
            <person name="Bowman S."/>
            <person name="Churcher C.M."/>
            <person name="Badcock K."/>
            <person name="Brown D."/>
            <person name="Chillingworth T."/>
            <person name="Connor R."/>
            <person name="Dedman K."/>
            <person name="Devlin K."/>
            <person name="Gentles S."/>
            <person name="Hamlin N."/>
            <person name="Hunt S."/>
            <person name="Jagels K."/>
            <person name="Lye G."/>
            <person name="Moule S."/>
            <person name="Odell C."/>
            <person name="Pearson D."/>
            <person name="Rajandream M.A."/>
            <person name="Rice P."/>
            <person name="Skelton J."/>
            <person name="Walsh S.V."/>
            <person name="Whitehead S."/>
            <person name="Barrell B.G."/>
        </authorList>
    </citation>
    <scope>NUCLEOTIDE SEQUENCE [LARGE SCALE GENOMIC DNA]</scope>
    <source>
        <strain>ATCC 204508 / S288c</strain>
    </source>
</reference>
<reference key="2">
    <citation type="journal article" date="2014" name="G3 (Bethesda)">
        <title>The reference genome sequence of Saccharomyces cerevisiae: Then and now.</title>
        <authorList>
            <person name="Engel S.R."/>
            <person name="Dietrich F.S."/>
            <person name="Fisk D.G."/>
            <person name="Binkley G."/>
            <person name="Balakrishnan R."/>
            <person name="Costanzo M.C."/>
            <person name="Dwight S.S."/>
            <person name="Hitz B.C."/>
            <person name="Karra K."/>
            <person name="Nash R.S."/>
            <person name="Weng S."/>
            <person name="Wong E.D."/>
            <person name="Lloyd P."/>
            <person name="Skrzypek M.S."/>
            <person name="Miyasato S.R."/>
            <person name="Simison M."/>
            <person name="Cherry J.M."/>
        </authorList>
    </citation>
    <scope>GENOME REANNOTATION</scope>
    <source>
        <strain>ATCC 204508 / S288c</strain>
    </source>
</reference>
<reference key="3">
    <citation type="journal article" date="2007" name="Genome Res.">
        <title>Approaching a complete repository of sequence-verified protein-encoding clones for Saccharomyces cerevisiae.</title>
        <authorList>
            <person name="Hu Y."/>
            <person name="Rolfs A."/>
            <person name="Bhullar B."/>
            <person name="Murthy T.V.S."/>
            <person name="Zhu C."/>
            <person name="Berger M.F."/>
            <person name="Camargo A.A."/>
            <person name="Kelley F."/>
            <person name="McCarron S."/>
            <person name="Jepson D."/>
            <person name="Richardson A."/>
            <person name="Raphael J."/>
            <person name="Moreira D."/>
            <person name="Taycher E."/>
            <person name="Zuo D."/>
            <person name="Mohr S."/>
            <person name="Kane M.F."/>
            <person name="Williamson J."/>
            <person name="Simpson A.J.G."/>
            <person name="Bulyk M.L."/>
            <person name="Harlow E."/>
            <person name="Marsischky G."/>
            <person name="Kolodner R.D."/>
            <person name="LaBaer J."/>
        </authorList>
    </citation>
    <scope>NUCLEOTIDE SEQUENCE [GENOMIC DNA]</scope>
    <source>
        <strain>ATCC 204508 / S288c</strain>
    </source>
</reference>
<reference key="4">
    <citation type="journal article" date="2001" name="Curr. Biol.">
        <title>A screen for genes required for meiosis and spore formation based on whole-genome expression.</title>
        <authorList>
            <person name="Rabitsch K.P."/>
            <person name="Toth A."/>
            <person name="Galova M."/>
            <person name="Schleiffer A."/>
            <person name="Schaffner G."/>
            <person name="Aigner E."/>
            <person name="Rupp C."/>
            <person name="Penkner A.M."/>
            <person name="Moreno-Borchart A.C."/>
            <person name="Primig M."/>
            <person name="Esposito R.E."/>
            <person name="Klein F."/>
            <person name="Knop M."/>
            <person name="Nasmyth K."/>
        </authorList>
    </citation>
    <scope>FUNCTION</scope>
</reference>
<reference key="5">
    <citation type="journal article" date="2002" name="Proc. Natl. Acad. Sci. U.S.A.">
        <title>Parallel phenotypic analysis of sporulation and postgermination growth in Saccharomyces cerevisiae.</title>
        <authorList>
            <person name="Deutschbauer A.M."/>
            <person name="Williams R.M."/>
            <person name="Chu A.M."/>
            <person name="Davis R.W."/>
        </authorList>
    </citation>
    <scope>FUNCTION</scope>
</reference>
<reference key="6">
    <citation type="journal article" date="2006" name="Proc. Natl. Acad. Sci. U.S.A.">
        <title>A global topology map of the Saccharomyces cerevisiae membrane proteome.</title>
        <authorList>
            <person name="Kim H."/>
            <person name="Melen K."/>
            <person name="Oesterberg M."/>
            <person name="von Heijne G."/>
        </authorList>
    </citation>
    <scope>TOPOLOGY [LARGE SCALE ANALYSIS]</scope>
    <source>
        <strain>ATCC 208353 / W303-1A</strain>
    </source>
</reference>
<reference key="7">
    <citation type="journal article" date="2007" name="J. Cell Sci.">
        <title>Erv14 family cargo receptors are necessary for ER exit during sporulation in Saccharomyces cerevisiae.</title>
        <authorList>
            <person name="Nakanishi H."/>
            <person name="Suda Y."/>
            <person name="Neiman A.M."/>
        </authorList>
    </citation>
    <scope>FUNCTION</scope>
    <scope>SUBCELLULAR LOCATION</scope>
</reference>
<sequence length="369" mass="40872">MLFPKRLIVWGVLLILSLSQFVLYLPATTCTNSKGLRLCAPQFTITVIGGSSTANEFIASVREFLRLISYLTIDMGWSNEFTDPSVYEDENLVDTFQPDKVFELNYFGFCKRSNKSKVYCTSNENYGMDVLEVLVRDVGIQLGNISTTRSNETKKFGDSLVLTYRLALTSIRDFLKHDKHTGNALSKALIGSPDPNVKGVSPTKNYLKGVNLAFILMMFNGMVFYFAVLEIIVGFLSICVVSAFGGALSVGKRHRLFPMLLKSSSSILVVIATLTILCNIVYLIALKTLEPEEVTDVGSDNAAVHTTGWELLKVNVGSGFIMGLARYAIQWVLLVLAFLAANHYKAKPKKSDKYTEDTSNSPSPDLMEK</sequence>
<evidence type="ECO:0000255" key="1"/>
<evidence type="ECO:0000256" key="2">
    <source>
        <dbReference type="SAM" id="MobiDB-lite"/>
    </source>
</evidence>
<evidence type="ECO:0000269" key="3">
    <source>
    </source>
</evidence>
<evidence type="ECO:0000269" key="4">
    <source>
    </source>
</evidence>
<evidence type="ECO:0000269" key="5">
    <source>
    </source>
</evidence>
<evidence type="ECO:0000305" key="6"/>
<dbReference type="EMBL" id="Z38114">
    <property type="protein sequence ID" value="CAA86255.1"/>
    <property type="molecule type" value="Genomic_DNA"/>
</dbReference>
<dbReference type="EMBL" id="AY557993">
    <property type="protein sequence ID" value="AAS56319.1"/>
    <property type="molecule type" value="Genomic_DNA"/>
</dbReference>
<dbReference type="EMBL" id="BK006946">
    <property type="protein sequence ID" value="DAA09831.1"/>
    <property type="molecule type" value="Genomic_DNA"/>
</dbReference>
<dbReference type="PIR" id="S48332">
    <property type="entry name" value="S48332"/>
</dbReference>
<dbReference type="RefSeq" id="NP_013645.1">
    <property type="nucleotide sequence ID" value="NM_001182425.1"/>
</dbReference>
<dbReference type="BioGRID" id="35100">
    <property type="interactions" value="223"/>
</dbReference>
<dbReference type="FunCoup" id="Q04658">
    <property type="interactions" value="32"/>
</dbReference>
<dbReference type="IntAct" id="Q04658">
    <property type="interactions" value="3"/>
</dbReference>
<dbReference type="MINT" id="Q04658"/>
<dbReference type="STRING" id="4932.YML066C"/>
<dbReference type="iPTMnet" id="Q04658"/>
<dbReference type="PaxDb" id="4932-YML066C"/>
<dbReference type="EnsemblFungi" id="YML066C_mRNA">
    <property type="protein sequence ID" value="YML066C"/>
    <property type="gene ID" value="YML066C"/>
</dbReference>
<dbReference type="GeneID" id="854936"/>
<dbReference type="KEGG" id="sce:YML066C"/>
<dbReference type="AGR" id="SGD:S000004531"/>
<dbReference type="SGD" id="S000004531">
    <property type="gene designation" value="SMA2"/>
</dbReference>
<dbReference type="VEuPathDB" id="FungiDB:YML066C"/>
<dbReference type="eggNOG" id="ENOG502QW7F">
    <property type="taxonomic scope" value="Eukaryota"/>
</dbReference>
<dbReference type="HOGENOM" id="CLU_776604_0_0_1"/>
<dbReference type="InParanoid" id="Q04658"/>
<dbReference type="OMA" id="TIDMGWS"/>
<dbReference type="OrthoDB" id="4073891at2759"/>
<dbReference type="BioCyc" id="YEAST:G3O-32661-MONOMER"/>
<dbReference type="BioGRID-ORCS" id="854936">
    <property type="hits" value="0 hits in 10 CRISPR screens"/>
</dbReference>
<dbReference type="PRO" id="PR:Q04658"/>
<dbReference type="Proteomes" id="UP000002311">
    <property type="component" value="Chromosome XIII"/>
</dbReference>
<dbReference type="RNAct" id="Q04658">
    <property type="molecule type" value="protein"/>
</dbReference>
<dbReference type="GO" id="GO:0005737">
    <property type="term" value="C:cytoplasm"/>
    <property type="evidence" value="ECO:0000314"/>
    <property type="project" value="SGD"/>
</dbReference>
<dbReference type="GO" id="GO:0005783">
    <property type="term" value="C:endoplasmic reticulum"/>
    <property type="evidence" value="ECO:0007669"/>
    <property type="project" value="UniProtKB-SubCell"/>
</dbReference>
<dbReference type="GO" id="GO:0000324">
    <property type="term" value="C:fungal-type vacuole"/>
    <property type="evidence" value="ECO:0007005"/>
    <property type="project" value="SGD"/>
</dbReference>
<dbReference type="GO" id="GO:0000329">
    <property type="term" value="C:fungal-type vacuole membrane"/>
    <property type="evidence" value="ECO:0007005"/>
    <property type="project" value="SGD"/>
</dbReference>
<dbReference type="GO" id="GO:0005628">
    <property type="term" value="C:prospore membrane"/>
    <property type="evidence" value="ECO:0000314"/>
    <property type="project" value="SGD"/>
</dbReference>
<dbReference type="GO" id="GO:0032120">
    <property type="term" value="P:ascospore-type prospore membrane formation"/>
    <property type="evidence" value="ECO:0000315"/>
    <property type="project" value="SGD"/>
</dbReference>
<dbReference type="GO" id="GO:0070583">
    <property type="term" value="P:spore membrane bending pathway"/>
    <property type="evidence" value="ECO:0000315"/>
    <property type="project" value="SGD"/>
</dbReference>
<comment type="function">
    <text evidence="3 4 5">Involved in spore and ascus formation. Required for the efficient assembly of the precursors of the prospore membrane to a continuous prospore membrane.</text>
</comment>
<comment type="subcellular location">
    <subcellularLocation>
        <location evidence="5">Prospore membrane</location>
        <topology evidence="5">Multi-pass membrane protein</topology>
    </subcellularLocation>
    <subcellularLocation>
        <location evidence="5">Endoplasmic reticulum</location>
    </subcellularLocation>
    <text>Localizes to prospore membrane, and accumulates in the endoplasmic reticulum in vegetative and sporulating ERV14-deleted cells.</text>
</comment>
<comment type="similarity">
    <text evidence="6">Belongs to the SMA2 family.</text>
</comment>